<sequence>MKQSHFFAHLSRMKLINRWPLMRNVRTENVSEHSLQVAMVAHALAAIKNRKFGGQLNAERIALLAMYHDASEVLTGDLPTPVKYFNSQIAQEYKAIEKIAQQKLVDMAPDELRDIFAPLIDENAWSEEEQAIVKQADALCAYLKCLEELSAGNNEFGLAKTRLEKTLELRRSQEMDYFMAVFVPSFHLSLDEISQDSPL</sequence>
<gene>
    <name evidence="1" type="primary">yfbR</name>
    <name type="ordered locus">SPAB_00644</name>
</gene>
<protein>
    <recommendedName>
        <fullName evidence="1">5'-deoxynucleotidase YfbR</fullName>
        <ecNumber evidence="1">3.1.3.89</ecNumber>
    </recommendedName>
    <alternativeName>
        <fullName evidence="1">5'-deoxyribonucleotidase</fullName>
    </alternativeName>
    <alternativeName>
        <fullName evidence="1">Nucleoside 5'-monophosphate phosphohydrolase</fullName>
    </alternativeName>
</protein>
<dbReference type="EC" id="3.1.3.89" evidence="1"/>
<dbReference type="EMBL" id="CP000886">
    <property type="protein sequence ID" value="ABX66070.1"/>
    <property type="molecule type" value="Genomic_DNA"/>
</dbReference>
<dbReference type="RefSeq" id="WP_000813882.1">
    <property type="nucleotide sequence ID" value="NC_010102.1"/>
</dbReference>
<dbReference type="SMR" id="A9N4B8"/>
<dbReference type="KEGG" id="spq:SPAB_00644"/>
<dbReference type="PATRIC" id="fig|1016998.12.peg.605"/>
<dbReference type="HOGENOM" id="CLU_084784_0_0_6"/>
<dbReference type="BioCyc" id="SENT1016998:SPAB_RS02675-MONOMER"/>
<dbReference type="Proteomes" id="UP000008556">
    <property type="component" value="Chromosome"/>
</dbReference>
<dbReference type="GO" id="GO:0005737">
    <property type="term" value="C:cytoplasm"/>
    <property type="evidence" value="ECO:0007669"/>
    <property type="project" value="UniProtKB-SubCell"/>
</dbReference>
<dbReference type="GO" id="GO:0002953">
    <property type="term" value="F:5'-deoxynucleotidase activity"/>
    <property type="evidence" value="ECO:0007669"/>
    <property type="project" value="UniProtKB-EC"/>
</dbReference>
<dbReference type="GO" id="GO:0046872">
    <property type="term" value="F:metal ion binding"/>
    <property type="evidence" value="ECO:0007669"/>
    <property type="project" value="UniProtKB-KW"/>
</dbReference>
<dbReference type="GO" id="GO:0000166">
    <property type="term" value="F:nucleotide binding"/>
    <property type="evidence" value="ECO:0007669"/>
    <property type="project" value="UniProtKB-KW"/>
</dbReference>
<dbReference type="FunFam" id="1.10.3210.10:FF:000002">
    <property type="entry name" value="Nucleotidase YfbR"/>
    <property type="match status" value="1"/>
</dbReference>
<dbReference type="Gene3D" id="1.10.3210.10">
    <property type="entry name" value="Hypothetical protein af1432"/>
    <property type="match status" value="1"/>
</dbReference>
<dbReference type="HAMAP" id="MF_01100">
    <property type="entry name" value="5DNU"/>
    <property type="match status" value="1"/>
</dbReference>
<dbReference type="InterPro" id="IPR003607">
    <property type="entry name" value="HD/PDEase_dom"/>
</dbReference>
<dbReference type="InterPro" id="IPR006674">
    <property type="entry name" value="HD_domain"/>
</dbReference>
<dbReference type="InterPro" id="IPR022971">
    <property type="entry name" value="YfbR"/>
</dbReference>
<dbReference type="InterPro" id="IPR039356">
    <property type="entry name" value="YfbR/HDDC2"/>
</dbReference>
<dbReference type="NCBIfam" id="NF003009">
    <property type="entry name" value="PRK03826.1"/>
    <property type="match status" value="1"/>
</dbReference>
<dbReference type="PANTHER" id="PTHR11845">
    <property type="entry name" value="5'-DEOXYNUCLEOTIDASE HDDC2"/>
    <property type="match status" value="1"/>
</dbReference>
<dbReference type="PANTHER" id="PTHR11845:SF13">
    <property type="entry name" value="5'-DEOXYNUCLEOTIDASE HDDC2"/>
    <property type="match status" value="1"/>
</dbReference>
<dbReference type="Pfam" id="PF12917">
    <property type="entry name" value="YfbR-like"/>
    <property type="match status" value="1"/>
</dbReference>
<dbReference type="SMART" id="SM00471">
    <property type="entry name" value="HDc"/>
    <property type="match status" value="1"/>
</dbReference>
<dbReference type="SUPFAM" id="SSF109604">
    <property type="entry name" value="HD-domain/PDEase-like"/>
    <property type="match status" value="1"/>
</dbReference>
<dbReference type="PROSITE" id="PS51831">
    <property type="entry name" value="HD"/>
    <property type="match status" value="1"/>
</dbReference>
<evidence type="ECO:0000255" key="1">
    <source>
        <dbReference type="HAMAP-Rule" id="MF_01100"/>
    </source>
</evidence>
<evidence type="ECO:0000255" key="2">
    <source>
        <dbReference type="PROSITE-ProRule" id="PRU01175"/>
    </source>
</evidence>
<keyword id="KW-0963">Cytoplasm</keyword>
<keyword id="KW-0378">Hydrolase</keyword>
<keyword id="KW-0479">Metal-binding</keyword>
<keyword id="KW-0547">Nucleotide-binding</keyword>
<accession>A9N4B8</accession>
<reference key="1">
    <citation type="submission" date="2007-11" db="EMBL/GenBank/DDBJ databases">
        <authorList>
            <consortium name="The Salmonella enterica serovar Paratyphi B Genome Sequencing Project"/>
            <person name="McClelland M."/>
            <person name="Sanderson E.K."/>
            <person name="Porwollik S."/>
            <person name="Spieth J."/>
            <person name="Clifton W.S."/>
            <person name="Fulton R."/>
            <person name="Cordes M."/>
            <person name="Wollam A."/>
            <person name="Shah N."/>
            <person name="Pepin K."/>
            <person name="Bhonagiri V."/>
            <person name="Nash W."/>
            <person name="Johnson M."/>
            <person name="Thiruvilangam P."/>
            <person name="Wilson R."/>
        </authorList>
    </citation>
    <scope>NUCLEOTIDE SEQUENCE [LARGE SCALE GENOMIC DNA]</scope>
    <source>
        <strain>ATCC BAA-1250 / SPB7</strain>
    </source>
</reference>
<name>5DNU_SALPB</name>
<organism>
    <name type="scientific">Salmonella paratyphi B (strain ATCC BAA-1250 / SPB7)</name>
    <dbReference type="NCBI Taxonomy" id="1016998"/>
    <lineage>
        <taxon>Bacteria</taxon>
        <taxon>Pseudomonadati</taxon>
        <taxon>Pseudomonadota</taxon>
        <taxon>Gammaproteobacteria</taxon>
        <taxon>Enterobacterales</taxon>
        <taxon>Enterobacteriaceae</taxon>
        <taxon>Salmonella</taxon>
    </lineage>
</organism>
<comment type="function">
    <text evidence="1">Catalyzes the strictly specific dephosphorylation of 2'-deoxyribonucleoside 5'-monophosphates.</text>
</comment>
<comment type="catalytic activity">
    <reaction evidence="1">
        <text>a 2'-deoxyribonucleoside 5'-phosphate + H2O = a 2'-deoxyribonucleoside + phosphate</text>
        <dbReference type="Rhea" id="RHEA:36167"/>
        <dbReference type="ChEBI" id="CHEBI:15377"/>
        <dbReference type="ChEBI" id="CHEBI:18274"/>
        <dbReference type="ChEBI" id="CHEBI:43474"/>
        <dbReference type="ChEBI" id="CHEBI:65317"/>
        <dbReference type="EC" id="3.1.3.89"/>
    </reaction>
</comment>
<comment type="cofactor">
    <cofactor evidence="1">
        <name>a divalent metal cation</name>
        <dbReference type="ChEBI" id="CHEBI:60240"/>
    </cofactor>
</comment>
<comment type="subunit">
    <text evidence="1">Homodimer.</text>
</comment>
<comment type="subcellular location">
    <subcellularLocation>
        <location evidence="1">Cytoplasm</location>
    </subcellularLocation>
</comment>
<comment type="similarity">
    <text evidence="1">Belongs to the 5DNU family.</text>
</comment>
<feature type="chain" id="PRO_1000084790" description="5'-deoxynucleotidase YfbR">
    <location>
        <begin position="1"/>
        <end position="199"/>
    </location>
</feature>
<feature type="domain" description="HD" evidence="2">
    <location>
        <begin position="30"/>
        <end position="142"/>
    </location>
</feature>
<feature type="binding site" evidence="1">
    <location>
        <begin position="18"/>
        <end position="19"/>
    </location>
    <ligand>
        <name>substrate</name>
    </ligand>
</feature>
<feature type="binding site" evidence="1">
    <location>
        <position position="33"/>
    </location>
    <ligand>
        <name>a divalent metal cation</name>
        <dbReference type="ChEBI" id="CHEBI:60240"/>
    </ligand>
</feature>
<feature type="binding site" evidence="1">
    <location>
        <position position="33"/>
    </location>
    <ligand>
        <name>substrate</name>
    </ligand>
</feature>
<feature type="binding site" evidence="1">
    <location>
        <position position="68"/>
    </location>
    <ligand>
        <name>a divalent metal cation</name>
        <dbReference type="ChEBI" id="CHEBI:60240"/>
    </ligand>
</feature>
<feature type="binding site" evidence="1">
    <location>
        <position position="69"/>
    </location>
    <ligand>
        <name>a divalent metal cation</name>
        <dbReference type="ChEBI" id="CHEBI:60240"/>
    </ligand>
</feature>
<feature type="binding site" evidence="1">
    <location>
        <position position="69"/>
    </location>
    <ligand>
        <name>substrate</name>
    </ligand>
</feature>
<feature type="binding site" evidence="1">
    <location>
        <begin position="77"/>
        <end position="80"/>
    </location>
    <ligand>
        <name>substrate</name>
    </ligand>
</feature>
<feature type="binding site" evidence="1">
    <location>
        <position position="137"/>
    </location>
    <ligand>
        <name>a divalent metal cation</name>
        <dbReference type="ChEBI" id="CHEBI:60240"/>
    </ligand>
</feature>
<feature type="binding site" evidence="1">
    <location>
        <position position="137"/>
    </location>
    <ligand>
        <name>substrate</name>
    </ligand>
</feature>
<feature type="site" description="Appears to be important in orienting the phosphate for catalysis" evidence="1">
    <location>
        <position position="18"/>
    </location>
</feature>
<proteinExistence type="inferred from homology"/>